<sequence>MSNWSIKDAYVGYNVNYWSSGLYGISEAGEVTVSPDPNHPEHTIGLNELAKDMVKSGVALPVLVRFPQILHHRVNSLCNAFNQAITRYDYQSDYLLVYPIKVNQQQTVVEEILASQVSKEVPQLGLEAGSKPELMAVLAMAQKASSVIICNGYKDVEYIRLALIGEKLGHQVYIVLEKLSELKVVLEEAKKLGVTPRLGLRVRLAFQGKGKWQASGGEKSKFGLSAAQVLNVINSLKDEDMLDSLQLLHFHLGSQIANIRDIRSGVSEAGRFYCELQKMGANVKCFDVGGGLAVDYDGTRSQSSNSMNYGLTEYANNIVSVLNDMCREHDQPMPRLISESGRYLTAHHAVLITDVIGTEAYKPEDLQAPDEEAPQQLKNMWDSWGEVSGRADQRALIEIYHDVQSDLAEVHSLFALGQMSLSDRAWAEQMNLRVCYELKGVMSGKYRFHRPVIDELNEKLADKFFVNFSLFQSLPDAWGIDQVFPVMPLSGLDKKPERRAVMLDITCDSDGTVDQYVDGQGIETTLPVPAWSAESPYLIGFFLVGAYQEILGDMHNLFGDTNSAVVRLDDDGLVNIESVLAGDTVADVLRYVNLDAVSFMRTYEELVNLHIQEDERANILEELQIGLKGYTYLEDFS</sequence>
<keyword id="KW-0210">Decarboxylase</keyword>
<keyword id="KW-0456">Lyase</keyword>
<keyword id="KW-0460">Magnesium</keyword>
<keyword id="KW-0479">Metal-binding</keyword>
<keyword id="KW-0620">Polyamine biosynthesis</keyword>
<keyword id="KW-0663">Pyridoxal phosphate</keyword>
<keyword id="KW-1185">Reference proteome</keyword>
<keyword id="KW-0745">Spermidine biosynthesis</keyword>
<name>SPEA_SHELP</name>
<gene>
    <name evidence="1" type="primary">speA</name>
    <name type="ordered locus">Shew_1619</name>
</gene>
<dbReference type="EC" id="4.1.1.19" evidence="1"/>
<dbReference type="EMBL" id="CP000606">
    <property type="protein sequence ID" value="ABO23486.1"/>
    <property type="molecule type" value="Genomic_DNA"/>
</dbReference>
<dbReference type="RefSeq" id="WP_011865418.1">
    <property type="nucleotide sequence ID" value="NC_009092.1"/>
</dbReference>
<dbReference type="SMR" id="A3QDD8"/>
<dbReference type="STRING" id="323850.Shew_1619"/>
<dbReference type="KEGG" id="slo:Shew_1619"/>
<dbReference type="eggNOG" id="COG1166">
    <property type="taxonomic scope" value="Bacteria"/>
</dbReference>
<dbReference type="HOGENOM" id="CLU_027243_1_0_6"/>
<dbReference type="OrthoDB" id="9802658at2"/>
<dbReference type="UniPathway" id="UPA00186">
    <property type="reaction ID" value="UER00284"/>
</dbReference>
<dbReference type="Proteomes" id="UP000001558">
    <property type="component" value="Chromosome"/>
</dbReference>
<dbReference type="GO" id="GO:0008792">
    <property type="term" value="F:arginine decarboxylase activity"/>
    <property type="evidence" value="ECO:0007669"/>
    <property type="project" value="UniProtKB-UniRule"/>
</dbReference>
<dbReference type="GO" id="GO:0046872">
    <property type="term" value="F:metal ion binding"/>
    <property type="evidence" value="ECO:0007669"/>
    <property type="project" value="UniProtKB-KW"/>
</dbReference>
<dbReference type="GO" id="GO:0006527">
    <property type="term" value="P:arginine catabolic process"/>
    <property type="evidence" value="ECO:0007669"/>
    <property type="project" value="InterPro"/>
</dbReference>
<dbReference type="GO" id="GO:0033388">
    <property type="term" value="P:putrescine biosynthetic process from arginine"/>
    <property type="evidence" value="ECO:0007669"/>
    <property type="project" value="TreeGrafter"/>
</dbReference>
<dbReference type="GO" id="GO:0008295">
    <property type="term" value="P:spermidine biosynthetic process"/>
    <property type="evidence" value="ECO:0007669"/>
    <property type="project" value="UniProtKB-UniRule"/>
</dbReference>
<dbReference type="CDD" id="cd06830">
    <property type="entry name" value="PLPDE_III_ADC"/>
    <property type="match status" value="1"/>
</dbReference>
<dbReference type="FunFam" id="1.10.287.3440:FF:000001">
    <property type="entry name" value="Biosynthetic arginine decarboxylase"/>
    <property type="match status" value="1"/>
</dbReference>
<dbReference type="FunFam" id="2.40.37.10:FF:000001">
    <property type="entry name" value="Biosynthetic arginine decarboxylase"/>
    <property type="match status" value="1"/>
</dbReference>
<dbReference type="FunFam" id="3.20.20.10:FF:000001">
    <property type="entry name" value="Biosynthetic arginine decarboxylase"/>
    <property type="match status" value="1"/>
</dbReference>
<dbReference type="Gene3D" id="1.10.287.3440">
    <property type="match status" value="1"/>
</dbReference>
<dbReference type="Gene3D" id="1.20.58.930">
    <property type="match status" value="1"/>
</dbReference>
<dbReference type="Gene3D" id="3.20.20.10">
    <property type="entry name" value="Alanine racemase"/>
    <property type="match status" value="1"/>
</dbReference>
<dbReference type="Gene3D" id="2.40.37.10">
    <property type="entry name" value="Lyase, Ornithine Decarboxylase, Chain A, domain 1"/>
    <property type="match status" value="1"/>
</dbReference>
<dbReference type="HAMAP" id="MF_01417">
    <property type="entry name" value="SpeA"/>
    <property type="match status" value="1"/>
</dbReference>
<dbReference type="InterPro" id="IPR009006">
    <property type="entry name" value="Ala_racemase/Decarboxylase_C"/>
</dbReference>
<dbReference type="InterPro" id="IPR040634">
    <property type="entry name" value="Arg_decarb_HB"/>
</dbReference>
<dbReference type="InterPro" id="IPR041128">
    <property type="entry name" value="Arg_decarbox_C"/>
</dbReference>
<dbReference type="InterPro" id="IPR002985">
    <property type="entry name" value="Arg_decrbxlase"/>
</dbReference>
<dbReference type="InterPro" id="IPR022644">
    <property type="entry name" value="De-COase2_N"/>
</dbReference>
<dbReference type="InterPro" id="IPR000183">
    <property type="entry name" value="Orn/DAP/Arg_de-COase"/>
</dbReference>
<dbReference type="InterPro" id="IPR029066">
    <property type="entry name" value="PLP-binding_barrel"/>
</dbReference>
<dbReference type="NCBIfam" id="NF003763">
    <property type="entry name" value="PRK05354.1"/>
    <property type="match status" value="1"/>
</dbReference>
<dbReference type="NCBIfam" id="TIGR01273">
    <property type="entry name" value="speA"/>
    <property type="match status" value="1"/>
</dbReference>
<dbReference type="PANTHER" id="PTHR43295">
    <property type="entry name" value="ARGININE DECARBOXYLASE"/>
    <property type="match status" value="1"/>
</dbReference>
<dbReference type="PANTHER" id="PTHR43295:SF9">
    <property type="entry name" value="BIOSYNTHETIC ARGININE DECARBOXYLASE"/>
    <property type="match status" value="1"/>
</dbReference>
<dbReference type="Pfam" id="PF17810">
    <property type="entry name" value="Arg_decarb_HB"/>
    <property type="match status" value="1"/>
</dbReference>
<dbReference type="Pfam" id="PF17944">
    <property type="entry name" value="Arg_decarbox_C"/>
    <property type="match status" value="1"/>
</dbReference>
<dbReference type="Pfam" id="PF02784">
    <property type="entry name" value="Orn_Arg_deC_N"/>
    <property type="match status" value="1"/>
</dbReference>
<dbReference type="PIRSF" id="PIRSF001336">
    <property type="entry name" value="Arg_decrbxlase"/>
    <property type="match status" value="1"/>
</dbReference>
<dbReference type="PRINTS" id="PR01180">
    <property type="entry name" value="ARGDCRBXLASE"/>
</dbReference>
<dbReference type="PRINTS" id="PR01179">
    <property type="entry name" value="ODADCRBXLASE"/>
</dbReference>
<dbReference type="SUPFAM" id="SSF51419">
    <property type="entry name" value="PLP-binding barrel"/>
    <property type="match status" value="1"/>
</dbReference>
<proteinExistence type="inferred from homology"/>
<evidence type="ECO:0000255" key="1">
    <source>
        <dbReference type="HAMAP-Rule" id="MF_01417"/>
    </source>
</evidence>
<organism>
    <name type="scientific">Shewanella loihica (strain ATCC BAA-1088 / PV-4)</name>
    <dbReference type="NCBI Taxonomy" id="323850"/>
    <lineage>
        <taxon>Bacteria</taxon>
        <taxon>Pseudomonadati</taxon>
        <taxon>Pseudomonadota</taxon>
        <taxon>Gammaproteobacteria</taxon>
        <taxon>Alteromonadales</taxon>
        <taxon>Shewanellaceae</taxon>
        <taxon>Shewanella</taxon>
    </lineage>
</organism>
<feature type="chain" id="PRO_1000024269" description="Biosynthetic arginine decarboxylase">
    <location>
        <begin position="1"/>
        <end position="637"/>
    </location>
</feature>
<feature type="binding site" evidence="1">
    <location>
        <begin position="286"/>
        <end position="296"/>
    </location>
    <ligand>
        <name>substrate</name>
    </ligand>
</feature>
<feature type="modified residue" description="N6-(pyridoxal phosphate)lysine" evidence="1">
    <location>
        <position position="101"/>
    </location>
</feature>
<accession>A3QDD8</accession>
<reference key="1">
    <citation type="submission" date="2007-03" db="EMBL/GenBank/DDBJ databases">
        <title>Complete sequence of Shewanella loihica PV-4.</title>
        <authorList>
            <consortium name="US DOE Joint Genome Institute"/>
            <person name="Copeland A."/>
            <person name="Lucas S."/>
            <person name="Lapidus A."/>
            <person name="Barry K."/>
            <person name="Detter J.C."/>
            <person name="Glavina del Rio T."/>
            <person name="Hammon N."/>
            <person name="Israni S."/>
            <person name="Dalin E."/>
            <person name="Tice H."/>
            <person name="Pitluck S."/>
            <person name="Chain P."/>
            <person name="Malfatti S."/>
            <person name="Shin M."/>
            <person name="Vergez L."/>
            <person name="Schmutz J."/>
            <person name="Larimer F."/>
            <person name="Land M."/>
            <person name="Hauser L."/>
            <person name="Kyrpides N."/>
            <person name="Mikhailova N."/>
            <person name="Romine M.F."/>
            <person name="Serres G."/>
            <person name="Fredrickson J."/>
            <person name="Tiedje J."/>
            <person name="Richardson P."/>
        </authorList>
    </citation>
    <scope>NUCLEOTIDE SEQUENCE [LARGE SCALE GENOMIC DNA]</scope>
    <source>
        <strain>ATCC BAA-1088 / PV-4</strain>
    </source>
</reference>
<protein>
    <recommendedName>
        <fullName evidence="1">Biosynthetic arginine decarboxylase</fullName>
        <shortName evidence="1">ADC</shortName>
        <ecNumber evidence="1">4.1.1.19</ecNumber>
    </recommendedName>
</protein>
<comment type="function">
    <text evidence="1">Catalyzes the biosynthesis of agmatine from arginine.</text>
</comment>
<comment type="catalytic activity">
    <reaction evidence="1">
        <text>L-arginine + H(+) = agmatine + CO2</text>
        <dbReference type="Rhea" id="RHEA:17641"/>
        <dbReference type="ChEBI" id="CHEBI:15378"/>
        <dbReference type="ChEBI" id="CHEBI:16526"/>
        <dbReference type="ChEBI" id="CHEBI:32682"/>
        <dbReference type="ChEBI" id="CHEBI:58145"/>
        <dbReference type="EC" id="4.1.1.19"/>
    </reaction>
</comment>
<comment type="cofactor">
    <cofactor evidence="1">
        <name>Mg(2+)</name>
        <dbReference type="ChEBI" id="CHEBI:18420"/>
    </cofactor>
</comment>
<comment type="cofactor">
    <cofactor evidence="1">
        <name>pyridoxal 5'-phosphate</name>
        <dbReference type="ChEBI" id="CHEBI:597326"/>
    </cofactor>
</comment>
<comment type="pathway">
    <text evidence="1">Amine and polyamine biosynthesis; agmatine biosynthesis; agmatine from L-arginine: step 1/1.</text>
</comment>
<comment type="similarity">
    <text evidence="1">Belongs to the Orn/Lys/Arg decarboxylase class-II family. SpeA subfamily.</text>
</comment>